<keyword id="KW-0256">Endoplasmic reticulum</keyword>
<keyword id="KW-0325">Glycoprotein</keyword>
<keyword id="KW-0445">Lipid transport</keyword>
<keyword id="KW-0446">Lipid-binding</keyword>
<keyword id="KW-1185">Reference proteome</keyword>
<keyword id="KW-0813">Transport</keyword>
<dbReference type="EMBL" id="CU329671">
    <property type="protein sequence ID" value="CAA17807.4"/>
    <property type="molecule type" value="Genomic_DNA"/>
</dbReference>
<dbReference type="PIR" id="T40287">
    <property type="entry name" value="T40287"/>
</dbReference>
<dbReference type="SMR" id="O43021"/>
<dbReference type="BioGRID" id="277463">
    <property type="interactions" value="3"/>
</dbReference>
<dbReference type="FunCoup" id="O43021">
    <property type="interactions" value="71"/>
</dbReference>
<dbReference type="STRING" id="284812.O43021"/>
<dbReference type="iPTMnet" id="O43021"/>
<dbReference type="PaxDb" id="4896-SPBC354.07c.1"/>
<dbReference type="EnsemblFungi" id="SPBC354.07c.1">
    <property type="protein sequence ID" value="SPBC354.07c.1:pep"/>
    <property type="gene ID" value="SPBC354.07c"/>
</dbReference>
<dbReference type="KEGG" id="spo:2540947"/>
<dbReference type="PomBase" id="SPBC354.07c"/>
<dbReference type="VEuPathDB" id="FungiDB:SPBC354.07c"/>
<dbReference type="eggNOG" id="KOG2210">
    <property type="taxonomic scope" value="Eukaryota"/>
</dbReference>
<dbReference type="HOGENOM" id="CLU_012334_0_2_1"/>
<dbReference type="InParanoid" id="O43021"/>
<dbReference type="OMA" id="LRWKFEF"/>
<dbReference type="Reactome" id="R-SPO-1482801">
    <property type="pathway name" value="Acyl chain remodelling of PS"/>
</dbReference>
<dbReference type="PRO" id="PR:O43021"/>
<dbReference type="Proteomes" id="UP000002485">
    <property type="component" value="Chromosome II"/>
</dbReference>
<dbReference type="GO" id="GO:0005829">
    <property type="term" value="C:cytosol"/>
    <property type="evidence" value="ECO:0000318"/>
    <property type="project" value="GO_Central"/>
</dbReference>
<dbReference type="GO" id="GO:0005783">
    <property type="term" value="C:endoplasmic reticulum"/>
    <property type="evidence" value="ECO:0007005"/>
    <property type="project" value="PomBase"/>
</dbReference>
<dbReference type="GO" id="GO:0016020">
    <property type="term" value="C:membrane"/>
    <property type="evidence" value="ECO:0000318"/>
    <property type="project" value="GO_Central"/>
</dbReference>
<dbReference type="GO" id="GO:0008142">
    <property type="term" value="F:oxysterol binding"/>
    <property type="evidence" value="ECO:0000318"/>
    <property type="project" value="GO_Central"/>
</dbReference>
<dbReference type="GO" id="GO:0120015">
    <property type="term" value="F:sterol transfer activity"/>
    <property type="evidence" value="ECO:0000266"/>
    <property type="project" value="PomBase"/>
</dbReference>
<dbReference type="GO" id="GO:0120009">
    <property type="term" value="P:intermembrane lipid transfer"/>
    <property type="evidence" value="ECO:0000305"/>
    <property type="project" value="PomBase"/>
</dbReference>
<dbReference type="GO" id="GO:0006629">
    <property type="term" value="P:lipid metabolic process"/>
    <property type="evidence" value="ECO:0000303"/>
    <property type="project" value="PomBase"/>
</dbReference>
<dbReference type="GO" id="GO:0015918">
    <property type="term" value="P:sterol transport"/>
    <property type="evidence" value="ECO:0000266"/>
    <property type="project" value="PomBase"/>
</dbReference>
<dbReference type="Gene3D" id="1.10.287.2720">
    <property type="match status" value="1"/>
</dbReference>
<dbReference type="Gene3D" id="2.40.160.120">
    <property type="match status" value="1"/>
</dbReference>
<dbReference type="Gene3D" id="3.30.70.3490">
    <property type="match status" value="1"/>
</dbReference>
<dbReference type="Gene3D" id="6.10.250.1430">
    <property type="match status" value="1"/>
</dbReference>
<dbReference type="InterPro" id="IPR037239">
    <property type="entry name" value="OSBP_sf"/>
</dbReference>
<dbReference type="InterPro" id="IPR000648">
    <property type="entry name" value="Oxysterol-bd"/>
</dbReference>
<dbReference type="InterPro" id="IPR018494">
    <property type="entry name" value="Oxysterol-bd_CS"/>
</dbReference>
<dbReference type="PANTHER" id="PTHR10972:SF210">
    <property type="entry name" value="OXYSTEROL-BINDING PROTEIN HOMOLOG C354.07C"/>
    <property type="match status" value="1"/>
</dbReference>
<dbReference type="PANTHER" id="PTHR10972">
    <property type="entry name" value="OXYSTEROL-BINDING PROTEIN-RELATED"/>
    <property type="match status" value="1"/>
</dbReference>
<dbReference type="Pfam" id="PF01237">
    <property type="entry name" value="Oxysterol_BP"/>
    <property type="match status" value="1"/>
</dbReference>
<dbReference type="SUPFAM" id="SSF144000">
    <property type="entry name" value="Oxysterol-binding protein-like"/>
    <property type="match status" value="1"/>
</dbReference>
<dbReference type="PROSITE" id="PS01013">
    <property type="entry name" value="OSBP"/>
    <property type="match status" value="1"/>
</dbReference>
<proteinExistence type="inferred from homology"/>
<accession>O43021</accession>
<sequence length="397" mass="45067">MSETSEQMEETVQSGNEPISKSTWMGFIKNLATFTGDLSTLSAPSFILSGTSLLEYMSYWFEFPELFVTIVDFPTPKERMLAVLKWYITGLSREYASRNKNYGTEKKPLNPILGELFYGSWDSSKGKVELTAEQVSHHGPESAAHVVCKEAGITVDTHNKYRSGFSGRTVYVNQLGQLRVHLEKYNETYYITLPNISLEGLWFMAPYIELYGSTYIVSNTNYITKIDYSGRGYFRGTKNSFKATIFEKNEDPDYIVEGVWTGESKLTIPSLKSTIFFLSIPSLEATPITVKPESEMGDWESRNVWKEVSAALASGNYDIVSSKKSTIEQSQRDMRKKEEAEGAVWARRYFKWEEHDSDARNALAQAVLEVIEPGFWIYIGDTHPSLPAGEQPVKRME</sequence>
<organism>
    <name type="scientific">Schizosaccharomyces pombe (strain 972 / ATCC 24843)</name>
    <name type="common">Fission yeast</name>
    <dbReference type="NCBI Taxonomy" id="284812"/>
    <lineage>
        <taxon>Eukaryota</taxon>
        <taxon>Fungi</taxon>
        <taxon>Dikarya</taxon>
        <taxon>Ascomycota</taxon>
        <taxon>Taphrinomycotina</taxon>
        <taxon>Schizosaccharomycetes</taxon>
        <taxon>Schizosaccharomycetales</taxon>
        <taxon>Schizosaccharomycetaceae</taxon>
        <taxon>Schizosaccharomyces</taxon>
    </lineage>
</organism>
<comment type="subcellular location">
    <subcellularLocation>
        <location evidence="2">Endoplasmic reticulum</location>
    </subcellularLocation>
</comment>
<comment type="similarity">
    <text evidence="3">Belongs to the OSBP family.</text>
</comment>
<protein>
    <recommendedName>
        <fullName>Oxysterol-binding protein homolog C354.07c</fullName>
    </recommendedName>
</protein>
<name>YGV7_SCHPO</name>
<reference key="1">
    <citation type="journal article" date="2002" name="Nature">
        <title>The genome sequence of Schizosaccharomyces pombe.</title>
        <authorList>
            <person name="Wood V."/>
            <person name="Gwilliam R."/>
            <person name="Rajandream M.A."/>
            <person name="Lyne M.H."/>
            <person name="Lyne R."/>
            <person name="Stewart A."/>
            <person name="Sgouros J.G."/>
            <person name="Peat N."/>
            <person name="Hayles J."/>
            <person name="Baker S.G."/>
            <person name="Basham D."/>
            <person name="Bowman S."/>
            <person name="Brooks K."/>
            <person name="Brown D."/>
            <person name="Brown S."/>
            <person name="Chillingworth T."/>
            <person name="Churcher C.M."/>
            <person name="Collins M."/>
            <person name="Connor R."/>
            <person name="Cronin A."/>
            <person name="Davis P."/>
            <person name="Feltwell T."/>
            <person name="Fraser A."/>
            <person name="Gentles S."/>
            <person name="Goble A."/>
            <person name="Hamlin N."/>
            <person name="Harris D.E."/>
            <person name="Hidalgo J."/>
            <person name="Hodgson G."/>
            <person name="Holroyd S."/>
            <person name="Hornsby T."/>
            <person name="Howarth S."/>
            <person name="Huckle E.J."/>
            <person name="Hunt S."/>
            <person name="Jagels K."/>
            <person name="James K.D."/>
            <person name="Jones L."/>
            <person name="Jones M."/>
            <person name="Leather S."/>
            <person name="McDonald S."/>
            <person name="McLean J."/>
            <person name="Mooney P."/>
            <person name="Moule S."/>
            <person name="Mungall K.L."/>
            <person name="Murphy L.D."/>
            <person name="Niblett D."/>
            <person name="Odell C."/>
            <person name="Oliver K."/>
            <person name="O'Neil S."/>
            <person name="Pearson D."/>
            <person name="Quail M.A."/>
            <person name="Rabbinowitsch E."/>
            <person name="Rutherford K.M."/>
            <person name="Rutter S."/>
            <person name="Saunders D."/>
            <person name="Seeger K."/>
            <person name="Sharp S."/>
            <person name="Skelton J."/>
            <person name="Simmonds M.N."/>
            <person name="Squares R."/>
            <person name="Squares S."/>
            <person name="Stevens K."/>
            <person name="Taylor K."/>
            <person name="Taylor R.G."/>
            <person name="Tivey A."/>
            <person name="Walsh S.V."/>
            <person name="Warren T."/>
            <person name="Whitehead S."/>
            <person name="Woodward J.R."/>
            <person name="Volckaert G."/>
            <person name="Aert R."/>
            <person name="Robben J."/>
            <person name="Grymonprez B."/>
            <person name="Weltjens I."/>
            <person name="Vanstreels E."/>
            <person name="Rieger M."/>
            <person name="Schaefer M."/>
            <person name="Mueller-Auer S."/>
            <person name="Gabel C."/>
            <person name="Fuchs M."/>
            <person name="Duesterhoeft A."/>
            <person name="Fritzc C."/>
            <person name="Holzer E."/>
            <person name="Moestl D."/>
            <person name="Hilbert H."/>
            <person name="Borzym K."/>
            <person name="Langer I."/>
            <person name="Beck A."/>
            <person name="Lehrach H."/>
            <person name="Reinhardt R."/>
            <person name="Pohl T.M."/>
            <person name="Eger P."/>
            <person name="Zimmermann W."/>
            <person name="Wedler H."/>
            <person name="Wambutt R."/>
            <person name="Purnelle B."/>
            <person name="Goffeau A."/>
            <person name="Cadieu E."/>
            <person name="Dreano S."/>
            <person name="Gloux S."/>
            <person name="Lelaure V."/>
            <person name="Mottier S."/>
            <person name="Galibert F."/>
            <person name="Aves S.J."/>
            <person name="Xiang Z."/>
            <person name="Hunt C."/>
            <person name="Moore K."/>
            <person name="Hurst S.M."/>
            <person name="Lucas M."/>
            <person name="Rochet M."/>
            <person name="Gaillardin C."/>
            <person name="Tallada V.A."/>
            <person name="Garzon A."/>
            <person name="Thode G."/>
            <person name="Daga R.R."/>
            <person name="Cruzado L."/>
            <person name="Jimenez J."/>
            <person name="Sanchez M."/>
            <person name="del Rey F."/>
            <person name="Benito J."/>
            <person name="Dominguez A."/>
            <person name="Revuelta J.L."/>
            <person name="Moreno S."/>
            <person name="Armstrong J."/>
            <person name="Forsburg S.L."/>
            <person name="Cerutti L."/>
            <person name="Lowe T."/>
            <person name="McCombie W.R."/>
            <person name="Paulsen I."/>
            <person name="Potashkin J."/>
            <person name="Shpakovski G.V."/>
            <person name="Ussery D."/>
            <person name="Barrell B.G."/>
            <person name="Nurse P."/>
        </authorList>
    </citation>
    <scope>NUCLEOTIDE SEQUENCE [LARGE SCALE GENOMIC DNA]</scope>
    <source>
        <strain>972 / ATCC 24843</strain>
    </source>
</reference>
<reference key="2">
    <citation type="journal article" date="2011" name="Science">
        <title>Comparative functional genomics of the fission yeasts.</title>
        <authorList>
            <person name="Rhind N."/>
            <person name="Chen Z."/>
            <person name="Yassour M."/>
            <person name="Thompson D.A."/>
            <person name="Haas B.J."/>
            <person name="Habib N."/>
            <person name="Wapinski I."/>
            <person name="Roy S."/>
            <person name="Lin M.F."/>
            <person name="Heiman D.I."/>
            <person name="Young S.K."/>
            <person name="Furuya K."/>
            <person name="Guo Y."/>
            <person name="Pidoux A."/>
            <person name="Chen H.M."/>
            <person name="Robbertse B."/>
            <person name="Goldberg J.M."/>
            <person name="Aoki K."/>
            <person name="Bayne E.H."/>
            <person name="Berlin A.M."/>
            <person name="Desjardins C.A."/>
            <person name="Dobbs E."/>
            <person name="Dukaj L."/>
            <person name="Fan L."/>
            <person name="FitzGerald M.G."/>
            <person name="French C."/>
            <person name="Gujja S."/>
            <person name="Hansen K."/>
            <person name="Keifenheim D."/>
            <person name="Levin J.Z."/>
            <person name="Mosher R.A."/>
            <person name="Mueller C.A."/>
            <person name="Pfiffner J."/>
            <person name="Priest M."/>
            <person name="Russ C."/>
            <person name="Smialowska A."/>
            <person name="Swoboda P."/>
            <person name="Sykes S.M."/>
            <person name="Vaughn M."/>
            <person name="Vengrova S."/>
            <person name="Yoder R."/>
            <person name="Zeng Q."/>
            <person name="Allshire R."/>
            <person name="Baulcombe D."/>
            <person name="Birren B.W."/>
            <person name="Brown W."/>
            <person name="Ekwall K."/>
            <person name="Kellis M."/>
            <person name="Leatherwood J."/>
            <person name="Levin H."/>
            <person name="Margalit H."/>
            <person name="Martienssen R."/>
            <person name="Nieduszynski C.A."/>
            <person name="Spatafora J.W."/>
            <person name="Friedman N."/>
            <person name="Dalgaard J.Z."/>
            <person name="Baumann P."/>
            <person name="Niki H."/>
            <person name="Regev A."/>
            <person name="Nusbaum C."/>
        </authorList>
    </citation>
    <scope>REVISION OF GENE MODEL</scope>
</reference>
<reference key="3">
    <citation type="journal article" date="2006" name="Nat. Biotechnol.">
        <title>ORFeome cloning and global analysis of protein localization in the fission yeast Schizosaccharomyces pombe.</title>
        <authorList>
            <person name="Matsuyama A."/>
            <person name="Arai R."/>
            <person name="Yashiroda Y."/>
            <person name="Shirai A."/>
            <person name="Kamata A."/>
            <person name="Sekido S."/>
            <person name="Kobayashi Y."/>
            <person name="Hashimoto A."/>
            <person name="Hamamoto M."/>
            <person name="Hiraoka Y."/>
            <person name="Horinouchi S."/>
            <person name="Yoshida M."/>
        </authorList>
    </citation>
    <scope>SUBCELLULAR LOCATION [LARGE SCALE ANALYSIS]</scope>
</reference>
<feature type="chain" id="PRO_0000100393" description="Oxysterol-binding protein homolog C354.07c">
    <location>
        <begin position="1"/>
        <end position="397"/>
    </location>
</feature>
<feature type="glycosylation site" description="N-linked (GlcNAc...) asparagine" evidence="1">
    <location>
        <position position="186"/>
    </location>
</feature>
<feature type="glycosylation site" description="N-linked (GlcNAc...) asparagine" evidence="1">
    <location>
        <position position="195"/>
    </location>
</feature>
<evidence type="ECO:0000255" key="1"/>
<evidence type="ECO:0000269" key="2">
    <source>
    </source>
</evidence>
<evidence type="ECO:0000305" key="3"/>
<gene>
    <name type="ORF">SPBC354.07c</name>
</gene>